<accession>Q7N7F7</accession>
<evidence type="ECO:0000255" key="1">
    <source>
        <dbReference type="HAMAP-Rule" id="MF_00067"/>
    </source>
</evidence>
<sequence length="193" mass="20889">MYQDLIRSELNEAADTLAKFLSDDANIEAIQKAAVLLADSFKVGGKVLSCGNGGSHCDAMHFAEELTGRYRENRPGYPAIAISDVSHLSCVSNDFGYEFVFSRYIEAVGKEGDVLLGISTSGNSGNIIKAVEAARLKGMKVITLTGKDGGKMAGTADVEIRVPHFGYADRIQEIHIKVIHILIQLIEKEMVKA</sequence>
<keyword id="KW-0119">Carbohydrate metabolism</keyword>
<keyword id="KW-0963">Cytoplasm</keyword>
<keyword id="KW-0413">Isomerase</keyword>
<keyword id="KW-0448">Lipopolysaccharide biosynthesis</keyword>
<keyword id="KW-0479">Metal-binding</keyword>
<keyword id="KW-1185">Reference proteome</keyword>
<keyword id="KW-0862">Zinc</keyword>
<gene>
    <name evidence="1" type="primary">gmhA</name>
    <name type="synonym">lpcA</name>
    <name type="ordered locus">plu1193</name>
</gene>
<name>GMHA_PHOLL</name>
<proteinExistence type="inferred from homology"/>
<comment type="function">
    <text evidence="1">Catalyzes the isomerization of sedoheptulose 7-phosphate in D-glycero-D-manno-heptose 7-phosphate.</text>
</comment>
<comment type="catalytic activity">
    <reaction evidence="1">
        <text>2 D-sedoheptulose 7-phosphate = D-glycero-alpha-D-manno-heptose 7-phosphate + D-glycero-beta-D-manno-heptose 7-phosphate</text>
        <dbReference type="Rhea" id="RHEA:27489"/>
        <dbReference type="ChEBI" id="CHEBI:57483"/>
        <dbReference type="ChEBI" id="CHEBI:60203"/>
        <dbReference type="ChEBI" id="CHEBI:60204"/>
        <dbReference type="EC" id="5.3.1.28"/>
    </reaction>
</comment>
<comment type="cofactor">
    <cofactor evidence="1">
        <name>Zn(2+)</name>
        <dbReference type="ChEBI" id="CHEBI:29105"/>
    </cofactor>
    <text evidence="1">Binds 1 zinc ion per subunit.</text>
</comment>
<comment type="pathway">
    <text evidence="1">Carbohydrate biosynthesis; D-glycero-D-manno-heptose 7-phosphate biosynthesis; D-glycero-alpha-D-manno-heptose 7-phosphate and D-glycero-beta-D-manno-heptose 7-phosphate from sedoheptulose 7-phosphate: step 1/1.</text>
</comment>
<comment type="pathway">
    <text>Bacterial outer membrane biogenesis; LPS core biosynthesis.</text>
</comment>
<comment type="subunit">
    <text evidence="1">Homotetramer.</text>
</comment>
<comment type="subcellular location">
    <subcellularLocation>
        <location evidence="1">Cytoplasm</location>
    </subcellularLocation>
</comment>
<comment type="miscellaneous">
    <text evidence="1">The reaction produces a racemic mixture of D-glycero-alpha-D-manno-heptose 7-phosphate and D-glycero-beta-D-manno-heptose 7-phosphate.</text>
</comment>
<comment type="similarity">
    <text evidence="1">Belongs to the SIS family. GmhA subfamily.</text>
</comment>
<reference key="1">
    <citation type="journal article" date="2003" name="Nat. Biotechnol.">
        <title>The genome sequence of the entomopathogenic bacterium Photorhabdus luminescens.</title>
        <authorList>
            <person name="Duchaud E."/>
            <person name="Rusniok C."/>
            <person name="Frangeul L."/>
            <person name="Buchrieser C."/>
            <person name="Givaudan A."/>
            <person name="Taourit S."/>
            <person name="Bocs S."/>
            <person name="Boursaux-Eude C."/>
            <person name="Chandler M."/>
            <person name="Charles J.-F."/>
            <person name="Dassa E."/>
            <person name="Derose R."/>
            <person name="Derzelle S."/>
            <person name="Freyssinet G."/>
            <person name="Gaudriault S."/>
            <person name="Medigue C."/>
            <person name="Lanois A."/>
            <person name="Powell K."/>
            <person name="Siguier P."/>
            <person name="Vincent R."/>
            <person name="Wingate V."/>
            <person name="Zouine M."/>
            <person name="Glaser P."/>
            <person name="Boemare N."/>
            <person name="Danchin A."/>
            <person name="Kunst F."/>
        </authorList>
    </citation>
    <scope>NUCLEOTIDE SEQUENCE [LARGE SCALE GENOMIC DNA]</scope>
    <source>
        <strain>DSM 15139 / CIP 105565 / TT01</strain>
    </source>
</reference>
<feature type="chain" id="PRO_0000136541" description="Phosphoheptose isomerase">
    <location>
        <begin position="1"/>
        <end position="193"/>
    </location>
</feature>
<feature type="domain" description="SIS" evidence="1">
    <location>
        <begin position="37"/>
        <end position="193"/>
    </location>
</feature>
<feature type="binding site" evidence="1">
    <location>
        <begin position="52"/>
        <end position="54"/>
    </location>
    <ligand>
        <name>substrate</name>
    </ligand>
</feature>
<feature type="binding site" evidence="1">
    <location>
        <position position="61"/>
    </location>
    <ligand>
        <name>Zn(2+)</name>
        <dbReference type="ChEBI" id="CHEBI:29105"/>
    </ligand>
</feature>
<feature type="binding site" evidence="1">
    <location>
        <position position="65"/>
    </location>
    <ligand>
        <name>substrate</name>
    </ligand>
</feature>
<feature type="binding site" evidence="1">
    <location>
        <position position="65"/>
    </location>
    <ligand>
        <name>Zn(2+)</name>
        <dbReference type="ChEBI" id="CHEBI:29105"/>
    </ligand>
</feature>
<feature type="binding site" evidence="1">
    <location>
        <begin position="93"/>
        <end position="94"/>
    </location>
    <ligand>
        <name>substrate</name>
    </ligand>
</feature>
<feature type="binding site" evidence="1">
    <location>
        <begin position="119"/>
        <end position="121"/>
    </location>
    <ligand>
        <name>substrate</name>
    </ligand>
</feature>
<feature type="binding site" evidence="1">
    <location>
        <position position="124"/>
    </location>
    <ligand>
        <name>substrate</name>
    </ligand>
</feature>
<feature type="binding site" evidence="1">
    <location>
        <position position="172"/>
    </location>
    <ligand>
        <name>substrate</name>
    </ligand>
</feature>
<feature type="binding site" evidence="1">
    <location>
        <position position="172"/>
    </location>
    <ligand>
        <name>Zn(2+)</name>
        <dbReference type="ChEBI" id="CHEBI:29105"/>
    </ligand>
</feature>
<feature type="binding site" evidence="1">
    <location>
        <position position="180"/>
    </location>
    <ligand>
        <name>Zn(2+)</name>
        <dbReference type="ChEBI" id="CHEBI:29105"/>
    </ligand>
</feature>
<protein>
    <recommendedName>
        <fullName evidence="1">Phosphoheptose isomerase</fullName>
        <ecNumber evidence="1">5.3.1.28</ecNumber>
    </recommendedName>
    <alternativeName>
        <fullName evidence="1">Sedoheptulose 7-phosphate isomerase</fullName>
    </alternativeName>
</protein>
<organism>
    <name type="scientific">Photorhabdus laumondii subsp. laumondii (strain DSM 15139 / CIP 105565 / TT01)</name>
    <name type="common">Photorhabdus luminescens subsp. laumondii</name>
    <dbReference type="NCBI Taxonomy" id="243265"/>
    <lineage>
        <taxon>Bacteria</taxon>
        <taxon>Pseudomonadati</taxon>
        <taxon>Pseudomonadota</taxon>
        <taxon>Gammaproteobacteria</taxon>
        <taxon>Enterobacterales</taxon>
        <taxon>Morganellaceae</taxon>
        <taxon>Photorhabdus</taxon>
    </lineage>
</organism>
<dbReference type="EC" id="5.3.1.28" evidence="1"/>
<dbReference type="EMBL" id="BX571862">
    <property type="protein sequence ID" value="CAE13487.1"/>
    <property type="molecule type" value="Genomic_DNA"/>
</dbReference>
<dbReference type="RefSeq" id="WP_011145520.1">
    <property type="nucleotide sequence ID" value="NC_005126.1"/>
</dbReference>
<dbReference type="SMR" id="Q7N7F7"/>
<dbReference type="STRING" id="243265.plu1193"/>
<dbReference type="GeneID" id="48847463"/>
<dbReference type="KEGG" id="plu:plu1193"/>
<dbReference type="eggNOG" id="COG0279">
    <property type="taxonomic scope" value="Bacteria"/>
</dbReference>
<dbReference type="HOGENOM" id="CLU_080999_4_0_6"/>
<dbReference type="OrthoDB" id="9810929at2"/>
<dbReference type="UniPathway" id="UPA00041">
    <property type="reaction ID" value="UER00436"/>
</dbReference>
<dbReference type="UniPathway" id="UPA00958"/>
<dbReference type="Proteomes" id="UP000002514">
    <property type="component" value="Chromosome"/>
</dbReference>
<dbReference type="GO" id="GO:0005737">
    <property type="term" value="C:cytoplasm"/>
    <property type="evidence" value="ECO:0007669"/>
    <property type="project" value="UniProtKB-SubCell"/>
</dbReference>
<dbReference type="GO" id="GO:0097367">
    <property type="term" value="F:carbohydrate derivative binding"/>
    <property type="evidence" value="ECO:0007669"/>
    <property type="project" value="InterPro"/>
</dbReference>
<dbReference type="GO" id="GO:0008968">
    <property type="term" value="F:D-sedoheptulose 7-phosphate isomerase activity"/>
    <property type="evidence" value="ECO:0007669"/>
    <property type="project" value="UniProtKB-UniRule"/>
</dbReference>
<dbReference type="GO" id="GO:0008270">
    <property type="term" value="F:zinc ion binding"/>
    <property type="evidence" value="ECO:0007669"/>
    <property type="project" value="UniProtKB-UniRule"/>
</dbReference>
<dbReference type="GO" id="GO:2001061">
    <property type="term" value="P:D-glycero-D-manno-heptose 7-phosphate biosynthetic process"/>
    <property type="evidence" value="ECO:0007669"/>
    <property type="project" value="UniProtKB-UniPathway"/>
</dbReference>
<dbReference type="GO" id="GO:0009244">
    <property type="term" value="P:lipopolysaccharide core region biosynthetic process"/>
    <property type="evidence" value="ECO:0007669"/>
    <property type="project" value="UniProtKB-UniPathway"/>
</dbReference>
<dbReference type="CDD" id="cd05006">
    <property type="entry name" value="SIS_GmhA"/>
    <property type="match status" value="1"/>
</dbReference>
<dbReference type="FunFam" id="3.40.50.10490:FF:000013">
    <property type="entry name" value="Phosphoheptose isomerase"/>
    <property type="match status" value="1"/>
</dbReference>
<dbReference type="Gene3D" id="3.40.50.10490">
    <property type="entry name" value="Glucose-6-phosphate isomerase like protein, domain 1"/>
    <property type="match status" value="1"/>
</dbReference>
<dbReference type="HAMAP" id="MF_00067">
    <property type="entry name" value="GmhA"/>
    <property type="match status" value="1"/>
</dbReference>
<dbReference type="InterPro" id="IPR035461">
    <property type="entry name" value="GmhA/DiaA"/>
</dbReference>
<dbReference type="InterPro" id="IPR004515">
    <property type="entry name" value="Phosphoheptose_Isoase"/>
</dbReference>
<dbReference type="InterPro" id="IPR001347">
    <property type="entry name" value="SIS_dom"/>
</dbReference>
<dbReference type="InterPro" id="IPR046348">
    <property type="entry name" value="SIS_dom_sf"/>
</dbReference>
<dbReference type="InterPro" id="IPR050099">
    <property type="entry name" value="SIS_GmhA/DiaA_subfam"/>
</dbReference>
<dbReference type="NCBIfam" id="TIGR00441">
    <property type="entry name" value="gmhA"/>
    <property type="match status" value="1"/>
</dbReference>
<dbReference type="NCBIfam" id="NF001628">
    <property type="entry name" value="PRK00414.1"/>
    <property type="match status" value="1"/>
</dbReference>
<dbReference type="PANTHER" id="PTHR30390:SF7">
    <property type="entry name" value="PHOSPHOHEPTOSE ISOMERASE"/>
    <property type="match status" value="1"/>
</dbReference>
<dbReference type="PANTHER" id="PTHR30390">
    <property type="entry name" value="SEDOHEPTULOSE 7-PHOSPHATE ISOMERASE / DNAA INITIATOR-ASSOCIATING FACTOR FOR REPLICATION INITIATION"/>
    <property type="match status" value="1"/>
</dbReference>
<dbReference type="Pfam" id="PF13580">
    <property type="entry name" value="SIS_2"/>
    <property type="match status" value="1"/>
</dbReference>
<dbReference type="SUPFAM" id="SSF53697">
    <property type="entry name" value="SIS domain"/>
    <property type="match status" value="1"/>
</dbReference>
<dbReference type="PROSITE" id="PS51464">
    <property type="entry name" value="SIS"/>
    <property type="match status" value="1"/>
</dbReference>